<gene>
    <name evidence="10" type="primary">mttp</name>
    <name evidence="11" type="synonym">mtp</name>
</gene>
<comment type="function">
    <text evidence="1 6 7 8">Catalyzes the transport of triglyceride between phospholipid surfaces (PubMed:17924655). Catalyzes the transport of cholesteryl ester, and phospholipid between phospholipid surfaces (By similarity). Required for the assembly and secretion of plasma lipoproteins that contain apolipoprotein B (PubMed:17924655, PubMed:22581286). Required for yolk lipid utilization and absorption of dietary lipids in larvae (PubMed:17176039).</text>
</comment>
<comment type="catalytic activity">
    <reaction evidence="1">
        <text>a 1,2-diacyl-sn-glycero-3-phosphocholine(in) = a 1,2-diacyl-sn-glycero-3-phosphocholine(out)</text>
        <dbReference type="Rhea" id="RHEA:38571"/>
        <dbReference type="ChEBI" id="CHEBI:57643"/>
    </reaction>
    <physiologicalReaction direction="left-to-right" evidence="1">
        <dbReference type="Rhea" id="RHEA:38572"/>
    </physiologicalReaction>
</comment>
<comment type="catalytic activity">
    <reaction evidence="1">
        <text>a 1,2-diacyl-sn-glycero-3-phosphoethanolamine(in) = a 1,2-diacyl-sn-glycero-3-phosphoethanolamine(out)</text>
        <dbReference type="Rhea" id="RHEA:38895"/>
        <dbReference type="ChEBI" id="CHEBI:64612"/>
    </reaction>
    <physiologicalReaction direction="left-to-right" evidence="1">
        <dbReference type="Rhea" id="RHEA:38896"/>
    </physiologicalReaction>
</comment>
<comment type="catalytic activity">
    <reaction evidence="1">
        <text>a cholesterol ester(in) = a cholesterol ester(out)</text>
        <dbReference type="Rhea" id="RHEA:39007"/>
        <dbReference type="ChEBI" id="CHEBI:17002"/>
    </reaction>
    <physiologicalReaction direction="left-to-right" evidence="1">
        <dbReference type="Rhea" id="RHEA:39008"/>
    </physiologicalReaction>
</comment>
<comment type="catalytic activity">
    <reaction evidence="1">
        <text>a triacyl-sn-glycerol(in) = a triacyl-sn-glycerol(out)</text>
        <dbReference type="Rhea" id="RHEA:39011"/>
        <dbReference type="ChEBI" id="CHEBI:64615"/>
    </reaction>
    <physiologicalReaction direction="left-to-right" evidence="1">
        <dbReference type="Rhea" id="RHEA:39012"/>
    </physiologicalReaction>
</comment>
<comment type="activity regulation">
    <text evidence="6">Inhibited by naringenin.</text>
</comment>
<comment type="subunit">
    <text evidence="7">Heterodimer; heterodimerizes with the protein disulfide isomerase.</text>
</comment>
<comment type="subcellular location">
    <subcellularLocation>
        <location evidence="7">Endoplasmic reticulum</location>
    </subcellularLocation>
    <subcellularLocation>
        <location evidence="1">Golgi apparatus</location>
    </subcellularLocation>
    <text evidence="7">Colocalizes with P4HB/PDI in the endoplasmic reticulum.</text>
</comment>
<comment type="tissue specificity">
    <text evidence="5">Highest expression in the proximal part of the anterior intestine. Lower expression in the distal part of the anterior intestine, in the posterior portion of the intestinal tube and liver. Very low expression levels in heart, brain, ovary, testis and kidney.</text>
</comment>
<comment type="developmental stage">
    <text evidence="5">Detected in the blastoderm margin by 4 hours post-fertilization (hpf). Expressed in the yolk syncytial layer (YSL) from 9 hpf to 24 hpf. By 48 hpf expression decreases in the extraembryonic YSL and is detected in the embryonic liver primordium and intestinal tube in which strongly expressed by 4 days post-fertilization (dpf). At 6 and 15 dpf expression is restricted to the two main liver lobes and the anterior part of the intestine including the intestinal bulb, but not detected in the pharynx or posterior intestine. Expressed in the enterocytes of the anterior part of intestine as well as in the hepatic cells in 15 dpf larvae. The total level of expression is very small before 2 hpf, increasing significantly between 2 and 5 hpf, and remaining high at 6 and 9 hpf. A significant decrease in the expression level is detected at 12 hpf and low level remains until the end of embryogenesis, which occurs by 72 hpf.</text>
</comment>
<comment type="induction">
    <text evidence="5 6">Expression is strongly up-regulated in the anterior intestine and to a lesser extent in liver in response to feeding in both larvae and adults (at protein level) (PubMed:15614773). Protein levels are not changed in 1 or 6 hours after feeding (PubMed:17176039).</text>
</comment>
<comment type="disruption phenotype">
    <text evidence="6 8">Larvae do not absorb dietary neutral lipids, consume very little yolk, are small and die by 6 days post-fertilization (dpf) with pronounced edema. No defects in intestinal absorption of short chain fatty acids. Loss of visualization of neutral lipids in the vasculature, heart and head structures by oil red o staining. Levels of apolipoprotein B, vitellogenin and lipovitellin unchanged. No cardiovascular defects or global intestinal function impairment. Increased expression of Foza2 and Pgc1 proteins (PubMed:17176039). Leads to excess angiogenesis and yolk absorption defects. Decreased mRNA levels of flt1 at 24 hours post-fertilization (hpf) with no change in the mRNA levels of kdrl or flt4 or in other vascular genes (PubMed:22581286).</text>
</comment>
<dbReference type="EMBL" id="AJ428850">
    <property type="protein sequence ID" value="CAD21747.1"/>
    <property type="molecule type" value="mRNA"/>
</dbReference>
<dbReference type="EMBL" id="BX908747">
    <property type="status" value="NOT_ANNOTATED_CDS"/>
    <property type="molecule type" value="Genomic_DNA"/>
</dbReference>
<dbReference type="EMBL" id="CABZ01049941">
    <property type="status" value="NOT_ANNOTATED_CDS"/>
    <property type="molecule type" value="Genomic_DNA"/>
</dbReference>
<dbReference type="EMBL" id="CABZ01050432">
    <property type="status" value="NOT_ANNOTATED_CDS"/>
    <property type="molecule type" value="Genomic_DNA"/>
</dbReference>
<dbReference type="EMBL" id="CU914777">
    <property type="status" value="NOT_ANNOTATED_CDS"/>
    <property type="molecule type" value="Genomic_DNA"/>
</dbReference>
<dbReference type="EMBL" id="FO704847">
    <property type="status" value="NOT_ANNOTATED_CDS"/>
    <property type="molecule type" value="Genomic_DNA"/>
</dbReference>
<dbReference type="EMBL" id="BC135020">
    <property type="protein sequence ID" value="AAI35021.1"/>
    <property type="molecule type" value="mRNA"/>
</dbReference>
<dbReference type="RefSeq" id="NP_998135.2">
    <property type="nucleotide sequence ID" value="NM_212970.2"/>
</dbReference>
<dbReference type="SMR" id="A0A0R4IVV0"/>
<dbReference type="FunCoup" id="A0A0R4IVV0">
    <property type="interactions" value="1269"/>
</dbReference>
<dbReference type="STRING" id="7955.ENSDARP00000024667"/>
<dbReference type="GlyCosmos" id="A0A0R4IVV0">
    <property type="glycosylation" value="2 sites, No reported glycans"/>
</dbReference>
<dbReference type="PaxDb" id="7955-ENSDARP00000024667"/>
<dbReference type="Ensembl" id="ENSDART00000015251">
    <property type="protein sequence ID" value="ENSDARP00000024667"/>
    <property type="gene ID" value="ENSDARG00000008637"/>
</dbReference>
<dbReference type="GeneID" id="406207"/>
<dbReference type="KEGG" id="dre:406207"/>
<dbReference type="AGR" id="ZFIN:ZDB-GENE-040419-2"/>
<dbReference type="CTD" id="4547"/>
<dbReference type="ZFIN" id="ZDB-GENE-040419-2">
    <property type="gene designation" value="mttp"/>
</dbReference>
<dbReference type="eggNOG" id="KOG4337">
    <property type="taxonomic scope" value="Eukaryota"/>
</dbReference>
<dbReference type="InParanoid" id="A0A0R4IVV0"/>
<dbReference type="OMA" id="HVWGGSA"/>
<dbReference type="OrthoDB" id="5865932at2759"/>
<dbReference type="Reactome" id="R-DRE-8964041">
    <property type="pathway name" value="LDL remodeling"/>
</dbReference>
<dbReference type="PRO" id="PR:A0A0R4IVV0"/>
<dbReference type="Proteomes" id="UP000000437">
    <property type="component" value="Chromosome 1"/>
</dbReference>
<dbReference type="Bgee" id="ENSDARG00000008637">
    <property type="expression patterns" value="Expressed in intestine and 21 other cell types or tissues"/>
</dbReference>
<dbReference type="ExpressionAtlas" id="A0A0R4IVV0">
    <property type="expression patterns" value="baseline and differential"/>
</dbReference>
<dbReference type="GO" id="GO:0016323">
    <property type="term" value="C:basolateral plasma membrane"/>
    <property type="evidence" value="ECO:0000318"/>
    <property type="project" value="GO_Central"/>
</dbReference>
<dbReference type="GO" id="GO:0005783">
    <property type="term" value="C:endoplasmic reticulum"/>
    <property type="evidence" value="ECO:0000250"/>
    <property type="project" value="UniProtKB"/>
</dbReference>
<dbReference type="GO" id="GO:0005794">
    <property type="term" value="C:Golgi apparatus"/>
    <property type="evidence" value="ECO:0000250"/>
    <property type="project" value="UniProtKB"/>
</dbReference>
<dbReference type="GO" id="GO:0008289">
    <property type="term" value="F:lipid binding"/>
    <property type="evidence" value="ECO:0007669"/>
    <property type="project" value="UniProtKB-KW"/>
</dbReference>
<dbReference type="GO" id="GO:0120013">
    <property type="term" value="F:lipid transfer activity"/>
    <property type="evidence" value="ECO:0000314"/>
    <property type="project" value="UniProtKB"/>
</dbReference>
<dbReference type="GO" id="GO:0005319">
    <property type="term" value="F:lipid transporter activity"/>
    <property type="evidence" value="ECO:0000250"/>
    <property type="project" value="ZFIN"/>
</dbReference>
<dbReference type="GO" id="GO:1904121">
    <property type="term" value="F:phosphatidylethanolamine transfer activity"/>
    <property type="evidence" value="ECO:0000250"/>
    <property type="project" value="UniProtKB"/>
</dbReference>
<dbReference type="GO" id="GO:0005548">
    <property type="term" value="F:phospholipid transporter activity"/>
    <property type="evidence" value="ECO:0000318"/>
    <property type="project" value="GO_Central"/>
</dbReference>
<dbReference type="GO" id="GO:0042632">
    <property type="term" value="P:cholesterol homeostasis"/>
    <property type="evidence" value="ECO:0000318"/>
    <property type="project" value="GO_Central"/>
</dbReference>
<dbReference type="GO" id="GO:0007586">
    <property type="term" value="P:digestion"/>
    <property type="evidence" value="ECO:0000270"/>
    <property type="project" value="ZFIN"/>
</dbReference>
<dbReference type="GO" id="GO:0006629">
    <property type="term" value="P:lipid metabolic process"/>
    <property type="evidence" value="ECO:0000315"/>
    <property type="project" value="ZFIN"/>
</dbReference>
<dbReference type="GO" id="GO:0006869">
    <property type="term" value="P:lipid transport"/>
    <property type="evidence" value="ECO:0000315"/>
    <property type="project" value="ZFIN"/>
</dbReference>
<dbReference type="GO" id="GO:0042158">
    <property type="term" value="P:lipoprotein biosynthetic process"/>
    <property type="evidence" value="ECO:0000315"/>
    <property type="project" value="ZFIN"/>
</dbReference>
<dbReference type="GO" id="GO:0042157">
    <property type="term" value="P:lipoprotein metabolic process"/>
    <property type="evidence" value="ECO:0000318"/>
    <property type="project" value="GO_Central"/>
</dbReference>
<dbReference type="GO" id="GO:0042953">
    <property type="term" value="P:lipoprotein transport"/>
    <property type="evidence" value="ECO:0000314"/>
    <property type="project" value="UniProtKB"/>
</dbReference>
<dbReference type="GO" id="GO:0015909">
    <property type="term" value="P:long-chain fatty acid transport"/>
    <property type="evidence" value="ECO:0000315"/>
    <property type="project" value="ZFIN"/>
</dbReference>
<dbReference type="GO" id="GO:0001579">
    <property type="term" value="P:medium-chain fatty acid transport"/>
    <property type="evidence" value="ECO:0000315"/>
    <property type="project" value="ZFIN"/>
</dbReference>
<dbReference type="GO" id="GO:0034377">
    <property type="term" value="P:plasma lipoprotein particle assembly"/>
    <property type="evidence" value="ECO:0000250"/>
    <property type="project" value="UniProtKB"/>
</dbReference>
<dbReference type="GO" id="GO:0009306">
    <property type="term" value="P:protein secretion"/>
    <property type="evidence" value="ECO:0000250"/>
    <property type="project" value="UniProtKB"/>
</dbReference>
<dbReference type="GO" id="GO:0002040">
    <property type="term" value="P:sprouting angiogenesis"/>
    <property type="evidence" value="ECO:0000315"/>
    <property type="project" value="ZFIN"/>
</dbReference>
<dbReference type="FunFam" id="2.30.230.10:FF:000001">
    <property type="entry name" value="Microsomal triglyceride transfer protein large subunit"/>
    <property type="match status" value="1"/>
</dbReference>
<dbReference type="FunFam" id="1.25.10.20:FF:000001">
    <property type="entry name" value="microsomal triglyceride transfer protein large subunit"/>
    <property type="match status" value="1"/>
</dbReference>
<dbReference type="Gene3D" id="2.30.230.10">
    <property type="entry name" value="Lipovitellin, beta-sheet shell regions, chain A"/>
    <property type="match status" value="1"/>
</dbReference>
<dbReference type="Gene3D" id="1.25.10.20">
    <property type="entry name" value="Vitellinogen, superhelical"/>
    <property type="match status" value="1"/>
</dbReference>
<dbReference type="InterPro" id="IPR015819">
    <property type="entry name" value="Lipid_transp_b-sht_shell"/>
</dbReference>
<dbReference type="InterPro" id="IPR011030">
    <property type="entry name" value="Lipovitellin_superhlx_dom"/>
</dbReference>
<dbReference type="InterPro" id="IPR045811">
    <property type="entry name" value="MTP_lip-bd"/>
</dbReference>
<dbReference type="InterPro" id="IPR039988">
    <property type="entry name" value="MTTP"/>
</dbReference>
<dbReference type="InterPro" id="IPR015816">
    <property type="entry name" value="Vitellinogen_b-sht_N"/>
</dbReference>
<dbReference type="InterPro" id="IPR001747">
    <property type="entry name" value="Vitellogenin_N"/>
</dbReference>
<dbReference type="PANTHER" id="PTHR13024:SF1">
    <property type="entry name" value="MICROSOMAL TRIGLYCERIDE TRANSFER PROTEIN LARGE SUBUNIT"/>
    <property type="match status" value="1"/>
</dbReference>
<dbReference type="PANTHER" id="PTHR13024">
    <property type="entry name" value="MICROSOMAL TRIGLYCERIDE TRANSFER PROTEIN, LARGE SUBUNIT"/>
    <property type="match status" value="1"/>
</dbReference>
<dbReference type="Pfam" id="PF19444">
    <property type="entry name" value="MTP_lip_bd"/>
    <property type="match status" value="1"/>
</dbReference>
<dbReference type="Pfam" id="PF01347">
    <property type="entry name" value="Vitellogenin_N"/>
    <property type="match status" value="1"/>
</dbReference>
<dbReference type="SMART" id="SM00638">
    <property type="entry name" value="LPD_N"/>
    <property type="match status" value="1"/>
</dbReference>
<dbReference type="SUPFAM" id="SSF56968">
    <property type="entry name" value="Lipovitellin-phosvitin complex, beta-sheet shell regions"/>
    <property type="match status" value="1"/>
</dbReference>
<dbReference type="SUPFAM" id="SSF48431">
    <property type="entry name" value="Lipovitellin-phosvitin complex, superhelical domain"/>
    <property type="match status" value="1"/>
</dbReference>
<dbReference type="PROSITE" id="PS51211">
    <property type="entry name" value="VITELLOGENIN"/>
    <property type="match status" value="1"/>
</dbReference>
<feature type="signal peptide" evidence="2">
    <location>
        <begin position="1"/>
        <end position="21"/>
    </location>
</feature>
<feature type="chain" id="PRO_5006451763" description="Microsomal triglyceride transfer protein large subunit" evidence="2">
    <location>
        <begin position="22"/>
        <end position="884"/>
    </location>
</feature>
<feature type="domain" description="Vitellogenin" evidence="4">
    <location>
        <begin position="26"/>
        <end position="660"/>
    </location>
</feature>
<feature type="glycosylation site" description="N-linked (GlcNAc...) asparagine" evidence="3">
    <location>
        <position position="348"/>
    </location>
</feature>
<feature type="glycosylation site" description="N-linked (GlcNAc...) asparagine">
    <location>
        <position position="787"/>
    </location>
</feature>
<feature type="disulfide bond" evidence="4">
    <location>
        <begin position="172"/>
        <end position="192"/>
    </location>
</feature>
<feature type="disulfide bond" evidence="4">
    <location>
        <begin position="438"/>
        <end position="443"/>
    </location>
</feature>
<feature type="sequence conflict" description="In Ref. 1; CAD21747." evidence="10" ref="1">
    <original>S</original>
    <variation>G</variation>
    <location>
        <position position="37"/>
    </location>
</feature>
<feature type="sequence conflict" description="In Ref. 1; CAD21747 and 3; AAI35021." evidence="10" ref="1 3">
    <original>G</original>
    <variation>E</variation>
    <location>
        <position position="50"/>
    </location>
</feature>
<feature type="sequence conflict" description="In Ref. 1; CAD21747 and 3; AAI35021." evidence="10" ref="1 3">
    <original>K</original>
    <variation>Q</variation>
    <location>
        <position position="81"/>
    </location>
</feature>
<feature type="sequence conflict" description="In Ref. 1; CAD21747." evidence="10" ref="1">
    <original>A</original>
    <variation>V</variation>
    <location>
        <position position="447"/>
    </location>
</feature>
<feature type="sequence conflict" description="In Ref. 1; CAD21747." evidence="10" ref="1">
    <original>A</original>
    <variation>T</variation>
    <location>
        <position position="488"/>
    </location>
</feature>
<feature type="sequence conflict" description="In Ref. 1; CAD21747." evidence="10" ref="1">
    <original>L</original>
    <variation>P</variation>
    <location>
        <position position="672"/>
    </location>
</feature>
<feature type="sequence conflict" description="In Ref. 1; CAD21747." evidence="10" ref="1">
    <original>M</original>
    <variation>T</variation>
    <location>
        <position position="718"/>
    </location>
</feature>
<feature type="sequence conflict" description="In Ref. 3; AAI35021." evidence="10" ref="3">
    <original>M</original>
    <variation>T</variation>
    <location>
        <position position="850"/>
    </location>
</feature>
<protein>
    <recommendedName>
        <fullName evidence="9">Microsomal triglyceride transfer protein large subunit</fullName>
    </recommendedName>
</protein>
<reference key="1">
    <citation type="journal article" date="2005" name="Dev. Dyn.">
        <title>Developmental expression and nutritional regulation of a zebrafish gene homologous to mammalian microsomal triglyceride transfer protein large subunit.</title>
        <authorList>
            <person name="Marza E."/>
            <person name="Barthe C."/>
            <person name="Andre M."/>
            <person name="Villeneuve L."/>
            <person name="Helou C."/>
            <person name="Babin P.J."/>
        </authorList>
    </citation>
    <scope>NUCLEOTIDE SEQUENCE [MRNA]</scope>
    <scope>TISSUE SPECIFICITY</scope>
    <scope>DEVELOPMENTAL STAGE</scope>
    <scope>INDUCTION</scope>
    <source>
        <tissue>Intestine</tissue>
    </source>
</reference>
<reference key="2">
    <citation type="journal article" date="2013" name="Nature">
        <title>The zebrafish reference genome sequence and its relationship to the human genome.</title>
        <authorList>
            <person name="Howe K."/>
            <person name="Clark M.D."/>
            <person name="Torroja C.F."/>
            <person name="Torrance J."/>
            <person name="Berthelot C."/>
            <person name="Muffato M."/>
            <person name="Collins J.E."/>
            <person name="Humphray S."/>
            <person name="McLaren K."/>
            <person name="Matthews L."/>
            <person name="McLaren S."/>
            <person name="Sealy I."/>
            <person name="Caccamo M."/>
            <person name="Churcher C."/>
            <person name="Scott C."/>
            <person name="Barrett J.C."/>
            <person name="Koch R."/>
            <person name="Rauch G.J."/>
            <person name="White S."/>
            <person name="Chow W."/>
            <person name="Kilian B."/>
            <person name="Quintais L.T."/>
            <person name="Guerra-Assuncao J.A."/>
            <person name="Zhou Y."/>
            <person name="Gu Y."/>
            <person name="Yen J."/>
            <person name="Vogel J.H."/>
            <person name="Eyre T."/>
            <person name="Redmond S."/>
            <person name="Banerjee R."/>
            <person name="Chi J."/>
            <person name="Fu B."/>
            <person name="Langley E."/>
            <person name="Maguire S.F."/>
            <person name="Laird G.K."/>
            <person name="Lloyd D."/>
            <person name="Kenyon E."/>
            <person name="Donaldson S."/>
            <person name="Sehra H."/>
            <person name="Almeida-King J."/>
            <person name="Loveland J."/>
            <person name="Trevanion S."/>
            <person name="Jones M."/>
            <person name="Quail M."/>
            <person name="Willey D."/>
            <person name="Hunt A."/>
            <person name="Burton J."/>
            <person name="Sims S."/>
            <person name="McLay K."/>
            <person name="Plumb B."/>
            <person name="Davis J."/>
            <person name="Clee C."/>
            <person name="Oliver K."/>
            <person name="Clark R."/>
            <person name="Riddle C."/>
            <person name="Elliot D."/>
            <person name="Threadgold G."/>
            <person name="Harden G."/>
            <person name="Ware D."/>
            <person name="Begum S."/>
            <person name="Mortimore B."/>
            <person name="Kerry G."/>
            <person name="Heath P."/>
            <person name="Phillimore B."/>
            <person name="Tracey A."/>
            <person name="Corby N."/>
            <person name="Dunn M."/>
            <person name="Johnson C."/>
            <person name="Wood J."/>
            <person name="Clark S."/>
            <person name="Pelan S."/>
            <person name="Griffiths G."/>
            <person name="Smith M."/>
            <person name="Glithero R."/>
            <person name="Howden P."/>
            <person name="Barker N."/>
            <person name="Lloyd C."/>
            <person name="Stevens C."/>
            <person name="Harley J."/>
            <person name="Holt K."/>
            <person name="Panagiotidis G."/>
            <person name="Lovell J."/>
            <person name="Beasley H."/>
            <person name="Henderson C."/>
            <person name="Gordon D."/>
            <person name="Auger K."/>
            <person name="Wright D."/>
            <person name="Collins J."/>
            <person name="Raisen C."/>
            <person name="Dyer L."/>
            <person name="Leung K."/>
            <person name="Robertson L."/>
            <person name="Ambridge K."/>
            <person name="Leongamornlert D."/>
            <person name="McGuire S."/>
            <person name="Gilderthorp R."/>
            <person name="Griffiths C."/>
            <person name="Manthravadi D."/>
            <person name="Nichol S."/>
            <person name="Barker G."/>
            <person name="Whitehead S."/>
            <person name="Kay M."/>
            <person name="Brown J."/>
            <person name="Murnane C."/>
            <person name="Gray E."/>
            <person name="Humphries M."/>
            <person name="Sycamore N."/>
            <person name="Barker D."/>
            <person name="Saunders D."/>
            <person name="Wallis J."/>
            <person name="Babbage A."/>
            <person name="Hammond S."/>
            <person name="Mashreghi-Mohammadi M."/>
            <person name="Barr L."/>
            <person name="Martin S."/>
            <person name="Wray P."/>
            <person name="Ellington A."/>
            <person name="Matthews N."/>
            <person name="Ellwood M."/>
            <person name="Woodmansey R."/>
            <person name="Clark G."/>
            <person name="Cooper J."/>
            <person name="Tromans A."/>
            <person name="Grafham D."/>
            <person name="Skuce C."/>
            <person name="Pandian R."/>
            <person name="Andrews R."/>
            <person name="Harrison E."/>
            <person name="Kimberley A."/>
            <person name="Garnett J."/>
            <person name="Fosker N."/>
            <person name="Hall R."/>
            <person name="Garner P."/>
            <person name="Kelly D."/>
            <person name="Bird C."/>
            <person name="Palmer S."/>
            <person name="Gehring I."/>
            <person name="Berger A."/>
            <person name="Dooley C.M."/>
            <person name="Ersan-Urun Z."/>
            <person name="Eser C."/>
            <person name="Geiger H."/>
            <person name="Geisler M."/>
            <person name="Karotki L."/>
            <person name="Kirn A."/>
            <person name="Konantz J."/>
            <person name="Konantz M."/>
            <person name="Oberlander M."/>
            <person name="Rudolph-Geiger S."/>
            <person name="Teucke M."/>
            <person name="Lanz C."/>
            <person name="Raddatz G."/>
            <person name="Osoegawa K."/>
            <person name="Zhu B."/>
            <person name="Rapp A."/>
            <person name="Widaa S."/>
            <person name="Langford C."/>
            <person name="Yang F."/>
            <person name="Schuster S.C."/>
            <person name="Carter N.P."/>
            <person name="Harrow J."/>
            <person name="Ning Z."/>
            <person name="Herrero J."/>
            <person name="Searle S.M."/>
            <person name="Enright A."/>
            <person name="Geisler R."/>
            <person name="Plasterk R.H."/>
            <person name="Lee C."/>
            <person name="Westerfield M."/>
            <person name="de Jong P.J."/>
            <person name="Zon L.I."/>
            <person name="Postlethwait J.H."/>
            <person name="Nusslein-Volhard C."/>
            <person name="Hubbard T.J."/>
            <person name="Roest Crollius H."/>
            <person name="Rogers J."/>
            <person name="Stemple D.L."/>
        </authorList>
    </citation>
    <scope>NUCLEOTIDE SEQUENCE [LARGE SCALE GENOMIC DNA]</scope>
    <source>
        <strain>Tuebingen</strain>
    </source>
</reference>
<reference key="3">
    <citation type="submission" date="2007-03" db="EMBL/GenBank/DDBJ databases">
        <authorList>
            <consortium name="NIH - Zebrafish Gene Collection (ZGC) project"/>
        </authorList>
    </citation>
    <scope>NUCLEOTIDE SEQUENCE [LARGE SCALE MRNA]</scope>
    <source>
        <strain evidence="10">Singapore</strain>
        <tissue>Embryo</tissue>
    </source>
</reference>
<reference key="4">
    <citation type="journal article" date="2006" name="Biochemistry">
        <title>Microsomal triglyceride transfer protein is required for yolk lipid utilization and absorption of dietary lipids in zebrafish larvae.</title>
        <authorList>
            <person name="Schlegel A."/>
            <person name="Stainier D.Y."/>
        </authorList>
    </citation>
    <scope>ACTIVITY REGULATION</scope>
    <scope>INDUCTION</scope>
    <scope>DISRUPTION PHENOTYPE</scope>
    <scope>FUNCTION</scope>
</reference>
<reference evidence="10" key="5">
    <citation type="journal article" date="2007" name="Biochemistry">
        <title>Acquisition of triacylglycerol transfer activity by microsomal triglyceride transfer protein during evolution.</title>
        <authorList>
            <person name="Rava P."/>
            <person name="Hussain M.M."/>
        </authorList>
    </citation>
    <scope>FUNCTION</scope>
    <scope>SUBUNIT</scope>
    <scope>SUBCELLULAR LOCATION</scope>
</reference>
<reference key="6">
    <citation type="journal article" date="2012" name="Nat. Med.">
        <title>ApoB-containing lipoproteins regulate angiogenesis by modulating expression of VEGF receptor 1.</title>
        <authorList>
            <person name="Avraham-Davidi I."/>
            <person name="Ely Y."/>
            <person name="Pham V.N."/>
            <person name="Castranova D."/>
            <person name="Grunspan M."/>
            <person name="Malkinson G."/>
            <person name="Gibbs-Bar L."/>
            <person name="Mayseless O."/>
            <person name="Allmog G."/>
            <person name="Lo B."/>
            <person name="Warren C.M."/>
            <person name="Chen T.T."/>
            <person name="Ungos J."/>
            <person name="Kidd K."/>
            <person name="Shaw K."/>
            <person name="Rogachev I."/>
            <person name="Wan W."/>
            <person name="Murphy P.M."/>
            <person name="Farber S.A."/>
            <person name="Carmel L."/>
            <person name="Shelness G.S."/>
            <person name="Iruela-Arispe M.L."/>
            <person name="Weinstein B.M."/>
            <person name="Yaniv K."/>
        </authorList>
    </citation>
    <scope>DISRUPTION PHENOTYPE</scope>
    <scope>FUNCTION</scope>
</reference>
<evidence type="ECO:0000250" key="1">
    <source>
        <dbReference type="UniProtKB" id="P55157"/>
    </source>
</evidence>
<evidence type="ECO:0000255" key="2"/>
<evidence type="ECO:0000255" key="3">
    <source>
        <dbReference type="PROSITE-ProRule" id="PRU00498"/>
    </source>
</evidence>
<evidence type="ECO:0000255" key="4">
    <source>
        <dbReference type="PROSITE-ProRule" id="PRU00557"/>
    </source>
</evidence>
<evidence type="ECO:0000269" key="5">
    <source>
    </source>
</evidence>
<evidence type="ECO:0000269" key="6">
    <source>
    </source>
</evidence>
<evidence type="ECO:0000269" key="7">
    <source>
    </source>
</evidence>
<evidence type="ECO:0000269" key="8">
    <source>
    </source>
</evidence>
<evidence type="ECO:0000303" key="9">
    <source>
    </source>
</evidence>
<evidence type="ECO:0000305" key="10"/>
<evidence type="ECO:0000312" key="11">
    <source>
        <dbReference type="ZFIN" id="ZDB-GENE-040419-2"/>
    </source>
</evidence>
<organism>
    <name type="scientific">Danio rerio</name>
    <name type="common">Zebrafish</name>
    <name type="synonym">Brachydanio rerio</name>
    <dbReference type="NCBI Taxonomy" id="7955"/>
    <lineage>
        <taxon>Eukaryota</taxon>
        <taxon>Metazoa</taxon>
        <taxon>Chordata</taxon>
        <taxon>Craniata</taxon>
        <taxon>Vertebrata</taxon>
        <taxon>Euteleostomi</taxon>
        <taxon>Actinopterygii</taxon>
        <taxon>Neopterygii</taxon>
        <taxon>Teleostei</taxon>
        <taxon>Ostariophysi</taxon>
        <taxon>Cypriniformes</taxon>
        <taxon>Danionidae</taxon>
        <taxon>Danioninae</taxon>
        <taxon>Danio</taxon>
    </lineage>
</organism>
<name>MTP_DANRE</name>
<sequence length="884" mass="96988">MMPVAGLLLCVTAVLCTSALGAGPRLDNGKLYRYSYSTEVGLNRPTGSPGGNVGFRISSDVDINLAWRNPEIQDEQLLQVKISNIQVESAGKHSRKNNIFHGSSAESILGKVRLEALQRPFLVLWKMGKIRSLYAQKAEPATVKNLKRGVASMLMMQLKSGKMSEADASGKCLVEYKVNKHQVIRTKHLETCKSQETGFTTHSPVLGISGKCAAETVITLENGIIKSADAKETHVLSINARHKAATKVLSRQSLTLKAIEAGPAEVAGKDVAGVVKALDDKFLSVGVIVEKTKPKCKGCPNLMETWKAVRSQLEPNSLSKAEAPRSFLTLVHSLRKSSKSEILTVLQNCSKTALPQLVDAVTSAQTPSSLSAILEFLDFSKKDGLILQERFLYACGFASHPTESMLQSLLEVSQGKIGSTEIKESVVIIMGALLRKLCLKGACDLPAVLKVKELLLAGPDSTQEESEVQMYLLALKNALLPEGIPVLAKYAESEVGAYSTIAITALQRYDPALITAEVKKALNRIYHQNQRIYEKNVRAAAADVIMSSNPSYMEVKNLLLSIGHLPHEMNKYMLSKIQDVLRFQMPAYKLVRQVMKDMISHNYDRFSKTGSSSAYSGFMAETVDVTCTYNLDILYSGSGVLRRSNMNIYGQSNNALLHGLQVTIEAQGLESLIAATPDEGEEELESFAGMSALLFDVQLRPVTFFKGYSDLMSKMFSMSGDPINVVKGLILLTDHSQVIPLQSGLRASAEFQAGLSIDISGGMEFSLWYRESKTSVNNRGALVIIGNMTVDTDFVSAGVEVGFETEATLDFITTVQFSEYPFLVCMQMDKTTFPFRETVSKQEKLPTGQMFSRKRSRDQVVPGSEFPLHQENSNMCKKVFEPAW</sequence>
<keyword id="KW-1015">Disulfide bond</keyword>
<keyword id="KW-0256">Endoplasmic reticulum</keyword>
<keyword id="KW-0325">Glycoprotein</keyword>
<keyword id="KW-0333">Golgi apparatus</keyword>
<keyword id="KW-0445">Lipid transport</keyword>
<keyword id="KW-0446">Lipid-binding</keyword>
<keyword id="KW-1185">Reference proteome</keyword>
<keyword id="KW-0732">Signal</keyword>
<keyword id="KW-0813">Transport</keyword>
<accession>A0A0R4IVV0</accession>
<accession>A4IGB9</accession>
<accession>Q8AXV7</accession>
<proteinExistence type="evidence at protein level"/>